<accession>Q5U303</accession>
<reference key="1">
    <citation type="journal article" date="2004" name="Genome Res.">
        <title>The status, quality, and expansion of the NIH full-length cDNA project: the Mammalian Gene Collection (MGC).</title>
        <authorList>
            <consortium name="The MGC Project Team"/>
        </authorList>
    </citation>
    <scope>NUCLEOTIDE SEQUENCE [LARGE SCALE MRNA] (ISOFORMS 1 AND 2)</scope>
    <source>
        <tissue>Kidney</tissue>
    </source>
</reference>
<name>TAB2_RAT</name>
<protein>
    <recommendedName>
        <fullName>TGF-beta-activated kinase 1 and MAP3K7-binding protein 2</fullName>
    </recommendedName>
    <alternativeName>
        <fullName>Mitogen-activated protein kinase kinase kinase 7-interacting protein 2</fullName>
    </alternativeName>
    <alternativeName>
        <fullName>TGF-beta-activated kinase 1-binding protein 2</fullName>
    </alternativeName>
</protein>
<dbReference type="EMBL" id="BC085788">
    <property type="protein sequence ID" value="AAH85788.1"/>
    <property type="molecule type" value="mRNA"/>
</dbReference>
<dbReference type="EMBL" id="CK364963">
    <property type="status" value="NOT_ANNOTATED_CDS"/>
    <property type="molecule type" value="mRNA"/>
</dbReference>
<dbReference type="RefSeq" id="NP_001012062.1">
    <property type="nucleotide sequence ID" value="NM_001012062.1"/>
</dbReference>
<dbReference type="RefSeq" id="NP_001380743.1">
    <molecule id="Q5U303-1"/>
    <property type="nucleotide sequence ID" value="NM_001393814.1"/>
</dbReference>
<dbReference type="RefSeq" id="XP_063144703.1">
    <molecule id="Q5U303-1"/>
    <property type="nucleotide sequence ID" value="XM_063288633.1"/>
</dbReference>
<dbReference type="BMRB" id="Q5U303"/>
<dbReference type="SMR" id="Q5U303"/>
<dbReference type="BioGRID" id="258943">
    <property type="interactions" value="1"/>
</dbReference>
<dbReference type="FunCoup" id="Q5U303">
    <property type="interactions" value="2511"/>
</dbReference>
<dbReference type="IntAct" id="Q5U303">
    <property type="interactions" value="1"/>
</dbReference>
<dbReference type="STRING" id="10116.ENSRNOP00000021904"/>
<dbReference type="iPTMnet" id="Q5U303"/>
<dbReference type="PhosphoSitePlus" id="Q5U303"/>
<dbReference type="PaxDb" id="10116-ENSRNOP00000021904"/>
<dbReference type="Ensembl" id="ENSRNOT00000021905.7">
    <molecule id="Q5U303-1"/>
    <property type="protein sequence ID" value="ENSRNOP00000021904.3"/>
    <property type="gene ID" value="ENSRNOG00000016054.8"/>
</dbReference>
<dbReference type="Ensembl" id="ENSRNOT00000061999.6">
    <molecule id="Q5U303-2"/>
    <property type="protein sequence ID" value="ENSRNOP00000058709.2"/>
    <property type="gene ID" value="ENSRNOG00000016054.8"/>
</dbReference>
<dbReference type="GeneID" id="308267"/>
<dbReference type="UCSC" id="RGD:1309527">
    <molecule id="Q5U303-1"/>
    <property type="organism name" value="rat"/>
</dbReference>
<dbReference type="AGR" id="RGD:1309527"/>
<dbReference type="RGD" id="1309527">
    <property type="gene designation" value="Tab2"/>
</dbReference>
<dbReference type="eggNOG" id="ENOG502QRAY">
    <property type="taxonomic scope" value="Eukaryota"/>
</dbReference>
<dbReference type="GeneTree" id="ENSGT00940000158473"/>
<dbReference type="HOGENOM" id="CLU_025065_1_0_1"/>
<dbReference type="InParanoid" id="Q5U303"/>
<dbReference type="OMA" id="GPTFIHH"/>
<dbReference type="OrthoDB" id="6288762at2759"/>
<dbReference type="PhylomeDB" id="Q5U303"/>
<dbReference type="TreeFam" id="TF332021"/>
<dbReference type="Reactome" id="R-RNO-168638">
    <property type="pathway name" value="NOD1/2 Signaling Pathway"/>
</dbReference>
<dbReference type="Reactome" id="R-RNO-202424">
    <property type="pathway name" value="Downstream TCR signaling"/>
</dbReference>
<dbReference type="Reactome" id="R-RNO-2871837">
    <property type="pathway name" value="FCERI mediated NF-kB activation"/>
</dbReference>
<dbReference type="Reactome" id="R-RNO-450302">
    <property type="pathway name" value="activated TAK1 mediates p38 MAPK activation"/>
</dbReference>
<dbReference type="Reactome" id="R-RNO-450321">
    <property type="pathway name" value="JNK (c-Jun kinases) phosphorylation and activation mediated by activated human TAK1"/>
</dbReference>
<dbReference type="Reactome" id="R-RNO-5357956">
    <property type="pathway name" value="TNFR1-induced NF-kappa-B signaling pathway"/>
</dbReference>
<dbReference type="Reactome" id="R-RNO-5607764">
    <property type="pathway name" value="CLEC7A (Dectin-1) signaling"/>
</dbReference>
<dbReference type="Reactome" id="R-RNO-9020702">
    <property type="pathway name" value="Interleukin-1 signaling"/>
</dbReference>
<dbReference type="Reactome" id="R-RNO-937042">
    <property type="pathway name" value="IRAK2 mediated activation of TAK1 complex"/>
</dbReference>
<dbReference type="Reactome" id="R-RNO-937072">
    <property type="pathway name" value="TRAF6-mediated induction of TAK1 complex within TLR4 complex"/>
</dbReference>
<dbReference type="Reactome" id="R-RNO-9645460">
    <property type="pathway name" value="Alpha-protein kinase 1 signaling pathway"/>
</dbReference>
<dbReference type="Reactome" id="R-RNO-975163">
    <property type="pathway name" value="IRAK2 mediated activation of TAK1 complex upon TLR7/8 or 9 stimulation"/>
</dbReference>
<dbReference type="PRO" id="PR:Q5U303"/>
<dbReference type="Proteomes" id="UP000002494">
    <property type="component" value="Chromosome 1"/>
</dbReference>
<dbReference type="Bgee" id="ENSRNOG00000016054">
    <property type="expression patterns" value="Expressed in skeletal muscle tissue and 19 other cell types or tissues"/>
</dbReference>
<dbReference type="GO" id="GO:0005737">
    <property type="term" value="C:cytoplasm"/>
    <property type="evidence" value="ECO:0000266"/>
    <property type="project" value="RGD"/>
</dbReference>
<dbReference type="GO" id="GO:0005829">
    <property type="term" value="C:cytosol"/>
    <property type="evidence" value="ECO:0007669"/>
    <property type="project" value="UniProtKB-SubCell"/>
</dbReference>
<dbReference type="GO" id="GO:0010008">
    <property type="term" value="C:endosome membrane"/>
    <property type="evidence" value="ECO:0007669"/>
    <property type="project" value="UniProtKB-SubCell"/>
</dbReference>
<dbReference type="GO" id="GO:0005765">
    <property type="term" value="C:lysosomal membrane"/>
    <property type="evidence" value="ECO:0007669"/>
    <property type="project" value="UniProtKB-SubCell"/>
</dbReference>
<dbReference type="GO" id="GO:0070530">
    <property type="term" value="F:K63-linked polyubiquitin modification-dependent protein binding"/>
    <property type="evidence" value="ECO:0000250"/>
    <property type="project" value="UniProtKB"/>
</dbReference>
<dbReference type="GO" id="GO:0060090">
    <property type="term" value="F:molecular adaptor activity"/>
    <property type="evidence" value="ECO:0000266"/>
    <property type="project" value="RGD"/>
</dbReference>
<dbReference type="GO" id="GO:0043130">
    <property type="term" value="F:ubiquitin binding"/>
    <property type="evidence" value="ECO:0007669"/>
    <property type="project" value="InterPro"/>
</dbReference>
<dbReference type="GO" id="GO:0008270">
    <property type="term" value="F:zinc ion binding"/>
    <property type="evidence" value="ECO:0000250"/>
    <property type="project" value="UniProtKB"/>
</dbReference>
<dbReference type="GO" id="GO:0042742">
    <property type="term" value="P:defense response to bacterium"/>
    <property type="evidence" value="ECO:0000266"/>
    <property type="project" value="RGD"/>
</dbReference>
<dbReference type="GO" id="GO:0007507">
    <property type="term" value="P:heart development"/>
    <property type="evidence" value="ECO:0000250"/>
    <property type="project" value="UniProtKB"/>
</dbReference>
<dbReference type="GO" id="GO:0006954">
    <property type="term" value="P:inflammatory response"/>
    <property type="evidence" value="ECO:0000266"/>
    <property type="project" value="RGD"/>
</dbReference>
<dbReference type="GO" id="GO:0038061">
    <property type="term" value="P:non-canonical NF-kappaB signal transduction"/>
    <property type="evidence" value="ECO:0000266"/>
    <property type="project" value="RGD"/>
</dbReference>
<dbReference type="GO" id="GO:0043123">
    <property type="term" value="P:positive regulation of canonical NF-kappaB signal transduction"/>
    <property type="evidence" value="ECO:0000250"/>
    <property type="project" value="UniProtKB"/>
</dbReference>
<dbReference type="GO" id="GO:0045860">
    <property type="term" value="P:positive regulation of protein kinase activity"/>
    <property type="evidence" value="ECO:0000250"/>
    <property type="project" value="UniProtKB"/>
</dbReference>
<dbReference type="GO" id="GO:0032496">
    <property type="term" value="P:response to lipopolysaccharide"/>
    <property type="evidence" value="ECO:0000266"/>
    <property type="project" value="RGD"/>
</dbReference>
<dbReference type="CDD" id="cd14362">
    <property type="entry name" value="CUE_TAB2_TAB3"/>
    <property type="match status" value="1"/>
</dbReference>
<dbReference type="FunFam" id="2.30.30.380:FF:000006">
    <property type="entry name" value="TGF-beta activated kinase 1 (MAP3K7) binding protein 2"/>
    <property type="match status" value="1"/>
</dbReference>
<dbReference type="FunFam" id="1.10.8.10:FF:000025">
    <property type="entry name" value="TGF-beta-activated kinase 1 and MAP3K7-binding protein 3"/>
    <property type="match status" value="1"/>
</dbReference>
<dbReference type="Gene3D" id="1.10.8.10">
    <property type="entry name" value="DNA helicase RuvA subunit, C-terminal domain"/>
    <property type="match status" value="1"/>
</dbReference>
<dbReference type="Gene3D" id="2.30.30.380">
    <property type="entry name" value="Zn-finger domain of Sec23/24"/>
    <property type="match status" value="1"/>
</dbReference>
<dbReference type="InterPro" id="IPR003892">
    <property type="entry name" value="CUE"/>
</dbReference>
<dbReference type="InterPro" id="IPR041911">
    <property type="entry name" value="TAB2/3_CUE"/>
</dbReference>
<dbReference type="InterPro" id="IPR001876">
    <property type="entry name" value="Znf_RanBP2"/>
</dbReference>
<dbReference type="InterPro" id="IPR036443">
    <property type="entry name" value="Znf_RanBP2_sf"/>
</dbReference>
<dbReference type="PANTHER" id="PTHR46253:SF2">
    <property type="entry name" value="TGF-BETA-ACTIVATED KINASE 1 AND MAP3K7-BINDING PROTEIN 2"/>
    <property type="match status" value="1"/>
</dbReference>
<dbReference type="PANTHER" id="PTHR46253">
    <property type="entry name" value="TGF-BETA-ACTIVATED KINASE 1 AND MAP3K7-BINDING PROTEIN TAB"/>
    <property type="match status" value="1"/>
</dbReference>
<dbReference type="Pfam" id="PF02845">
    <property type="entry name" value="CUE"/>
    <property type="match status" value="1"/>
</dbReference>
<dbReference type="SMART" id="SM00546">
    <property type="entry name" value="CUE"/>
    <property type="match status" value="1"/>
</dbReference>
<dbReference type="SMART" id="SM00547">
    <property type="entry name" value="ZnF_RBZ"/>
    <property type="match status" value="1"/>
</dbReference>
<dbReference type="SUPFAM" id="SSF90209">
    <property type="entry name" value="Ran binding protein zinc finger-like"/>
    <property type="match status" value="1"/>
</dbReference>
<dbReference type="PROSITE" id="PS51140">
    <property type="entry name" value="CUE"/>
    <property type="match status" value="1"/>
</dbReference>
<dbReference type="PROSITE" id="PS01358">
    <property type="entry name" value="ZF_RANBP2_1"/>
    <property type="match status" value="1"/>
</dbReference>
<dbReference type="PROSITE" id="PS50199">
    <property type="entry name" value="ZF_RANBP2_2"/>
    <property type="match status" value="1"/>
</dbReference>
<comment type="function">
    <text evidence="1 2">Adapter required to activate the JNK and NF-kappa-B signaling pathways through the specific recognition of 'Lys-63'-linked polyubiquitin chains by its RanBP2-type zinc finger (NZF). Acts as an adapter linking MAP3K7/TAK1 and TRAF6 to 'Lys-63'-linked polyubiquitin chains. The RanBP2-type zinc finger (NZF) specifically recognizes Lys-63'-linked polyubiquitin chains unanchored or anchored to the substrate proteins such as RIPK1/RIP1 and RIPK2: this acts as a scaffold to organize a large signaling complex to promote autophosphorylation of MAP3K7/TAK1, and subsequent activation of I-kappa-B-kinase (IKK) core complex by MAP3K7/TAK1 (By similarity). Also recognizes and binds Lys-63'-linked polyubiquitin chains of heterotypic 'Lys-63'-/'Lys-48'-linked branched ubiquitin chains (By similarity). Regulates the IL1-mediated translocation of NCOR1 out of the nucleus (By similarity). Involved in heart development (By similarity).</text>
</comment>
<comment type="subunit">
    <text evidence="1 2">Interacts with MAP3K7 and TRAF6. Identified in the TRIKA2 complex composed of MAP3K7, TAB1 and TAB2. Binds 'Lys-63'-linked polyubiquitin chains (By similarity). Interacts with NCOR1 and HDAC3 to form a ternary complex (By similarity). Interacts (via C-terminal) with NUMBL (via PTB domain). Interacts (via the C-terminus) with DYNC2I2 (via WD domains). Interacts with RBCK1. Interacts with TRIM5 (By similarity). Interacts with TRIM38 (via B30.2/SPRY domain), leading to its translocation to lysosomes and degradation (By similarity). Interacts with ASB1; this interaction promotes TAB2 stability (By similarity).</text>
</comment>
<comment type="subcellular location">
    <subcellularLocation>
        <location evidence="2">Membrane</location>
        <topology evidence="2">Peripheral membrane protein</topology>
    </subcellularLocation>
    <subcellularLocation>
        <location evidence="2">Endosome membrane</location>
        <topology evidence="2">Peripheral membrane protein</topology>
    </subcellularLocation>
    <subcellularLocation>
        <location evidence="2">Lysosome membrane</location>
        <topology evidence="2">Peripheral membrane protein</topology>
    </subcellularLocation>
    <subcellularLocation>
        <location evidence="2">Cytoplasm</location>
        <location evidence="2">Cytosol</location>
    </subcellularLocation>
    <text evidence="2">Following IL1 stimulation, translocation occurs from the membrane to cytosol. Interaction with TRIM38 promotes translocation from cytosol to endosome and lysosome.</text>
</comment>
<comment type="alternative products">
    <event type="alternative splicing"/>
    <isoform>
        <id>Q5U303-1</id>
        <name>1</name>
        <sequence type="displayed"/>
    </isoform>
    <isoform>
        <id>Q5U303-2</id>
        <name>2</name>
        <sequence type="described" ref="VSP_017421"/>
    </isoform>
</comment>
<comment type="domain">
    <text evidence="2">The RanBP2-type zinc finger (NZF) mediates binding to two consecutive 'Lys-63'-linked ubiquitins.</text>
</comment>
<comment type="PTM">
    <text evidence="2">SUMOylated by TRIM60; leading to inhibition of MAPK/NF-kappaB activation and the innate immune response.</text>
</comment>
<comment type="PTM">
    <text evidence="2">Ubiquitinated; following IL1 stimulation or TRAF6 overexpression. Ubiquitination involves RBCK1 leading to proteasomal degradation. Ubiquitinated at Lys-611 by TRIM45 leading to proteasomal degradation.</text>
</comment>
<comment type="PTM">
    <text evidence="2">Degraded in a lysosome-dependent manner following interaction with TRIM38.</text>
</comment>
<comment type="PTM">
    <text evidence="2">Phosphorylated.</text>
</comment>
<keyword id="KW-0025">Alternative splicing</keyword>
<keyword id="KW-0175">Coiled coil</keyword>
<keyword id="KW-0963">Cytoplasm</keyword>
<keyword id="KW-0967">Endosome</keyword>
<keyword id="KW-1017">Isopeptide bond</keyword>
<keyword id="KW-0458">Lysosome</keyword>
<keyword id="KW-0472">Membrane</keyword>
<keyword id="KW-0479">Metal-binding</keyword>
<keyword id="KW-0488">Methylation</keyword>
<keyword id="KW-0597">Phosphoprotein</keyword>
<keyword id="KW-1185">Reference proteome</keyword>
<keyword id="KW-0832">Ubl conjugation</keyword>
<keyword id="KW-0862">Zinc</keyword>
<keyword id="KW-0863">Zinc-finger</keyword>
<proteinExistence type="evidence at transcript level"/>
<evidence type="ECO:0000250" key="1">
    <source>
        <dbReference type="UniProtKB" id="Q99K90"/>
    </source>
</evidence>
<evidence type="ECO:0000250" key="2">
    <source>
        <dbReference type="UniProtKB" id="Q9NYJ8"/>
    </source>
</evidence>
<evidence type="ECO:0000255" key="3"/>
<evidence type="ECO:0000255" key="4">
    <source>
        <dbReference type="PROSITE-ProRule" id="PRU00322"/>
    </source>
</evidence>
<evidence type="ECO:0000255" key="5">
    <source>
        <dbReference type="PROSITE-ProRule" id="PRU00468"/>
    </source>
</evidence>
<evidence type="ECO:0000256" key="6">
    <source>
        <dbReference type="SAM" id="MobiDB-lite"/>
    </source>
</evidence>
<evidence type="ECO:0000303" key="7">
    <source>
    </source>
</evidence>
<gene>
    <name type="primary">Tab2</name>
    <name type="synonym">Map3k7ip2</name>
</gene>
<organism>
    <name type="scientific">Rattus norvegicus</name>
    <name type="common">Rat</name>
    <dbReference type="NCBI Taxonomy" id="10116"/>
    <lineage>
        <taxon>Eukaryota</taxon>
        <taxon>Metazoa</taxon>
        <taxon>Chordata</taxon>
        <taxon>Craniata</taxon>
        <taxon>Vertebrata</taxon>
        <taxon>Euteleostomi</taxon>
        <taxon>Mammalia</taxon>
        <taxon>Eutheria</taxon>
        <taxon>Euarchontoglires</taxon>
        <taxon>Glires</taxon>
        <taxon>Rodentia</taxon>
        <taxon>Myomorpha</taxon>
        <taxon>Muroidea</taxon>
        <taxon>Muridae</taxon>
        <taxon>Murinae</taxon>
        <taxon>Rattus</taxon>
    </lineage>
</organism>
<sequence length="693" mass="76328">MAQGSHQIDFQVLHDLRQKFPEVPEVVVSRCMLQNNNNLDACCAVLSQESTRYLYGEGDLNFSDESGISGLRNHMTSLNLDLQSQNVYHHGREGSRVNGSRTLTHSVSDGQLQGGQSNNELFQQEPQTAPAQVPQGFNVFGMPSTSGASNSTPHLGFHLGSKGTSNLSQQTPRFNPIMVTLAPNIQTGRSTPTSLHIHGVPPPVLNSPQGNSIYIRPYITTPSGAARQTQQHSGWVSQFNPVNPQQAYQPSQPGPWTTYPASNPLPHTSTQQPNQQGHQTSHVYMPISSPTTPQPPTVHSSASSQSSAHSQYNIQNISTGPRKNQIEIKLEPPQRNSSSKLRSSGPRTASTSSLVNSQTLNRNQPTVYIAASPPSTDEMISRSQPKVYISANASTGDEQGMRNQPTLFISTNSGASAASRNMSGQVSMGPAFIHHHPPKSRVLGGNSAASPRVVVTQPNTKYTFKITVSPNKPPAVSPGVVSPTFELTNLLNHPDHYVETETIQHLTDPTLAHVDRVSEARKLSMGSDDAAYTQALLVHQKARMERLQRELEMQKKKLDKLKSEVNEMENSLTRRRLKRSNSMSQIPSLEEMQQLRSCNRQLQIDIDCLTKEIDLFQARGPHFNPSAIHNFYDNIGFVGPVPPKPKDQRSTIKAPKTQDTEDEEGAQWNCTACTFLNHPALIRCEQCEMPRHF</sequence>
<feature type="chain" id="PRO_0000225697" description="TGF-beta-activated kinase 1 and MAP3K7-binding protein 2">
    <location>
        <begin position="1"/>
        <end position="693"/>
    </location>
</feature>
<feature type="domain" description="CUE" evidence="5">
    <location>
        <begin position="8"/>
        <end position="51"/>
    </location>
</feature>
<feature type="zinc finger region" description="RanBP2-type" evidence="4">
    <location>
        <begin position="663"/>
        <end position="693"/>
    </location>
</feature>
<feature type="region of interest" description="Disordered" evidence="6">
    <location>
        <begin position="90"/>
        <end position="117"/>
    </location>
</feature>
<feature type="region of interest" description="Disordered" evidence="6">
    <location>
        <begin position="224"/>
        <end position="310"/>
    </location>
</feature>
<feature type="region of interest" description="Disordered" evidence="6">
    <location>
        <begin position="330"/>
        <end position="361"/>
    </location>
</feature>
<feature type="region of interest" description="Disordered" evidence="6">
    <location>
        <begin position="564"/>
        <end position="583"/>
    </location>
</feature>
<feature type="region of interest" description="Disordered" evidence="6">
    <location>
        <begin position="640"/>
        <end position="663"/>
    </location>
</feature>
<feature type="region of interest" description="Interaction with polyubiquitin" evidence="2">
    <location>
        <begin position="675"/>
        <end position="685"/>
    </location>
</feature>
<feature type="coiled-coil region" evidence="3">
    <location>
        <begin position="532"/>
        <end position="619"/>
    </location>
</feature>
<feature type="compositionally biased region" description="Polar residues" evidence="6">
    <location>
        <begin position="97"/>
        <end position="117"/>
    </location>
</feature>
<feature type="compositionally biased region" description="Polar residues" evidence="6">
    <location>
        <begin position="224"/>
        <end position="282"/>
    </location>
</feature>
<feature type="compositionally biased region" description="Low complexity" evidence="6">
    <location>
        <begin position="286"/>
        <end position="310"/>
    </location>
</feature>
<feature type="compositionally biased region" description="Polar residues" evidence="6">
    <location>
        <begin position="334"/>
        <end position="361"/>
    </location>
</feature>
<feature type="modified residue" description="Asymmetric dimethylarginine" evidence="2">
    <location>
        <position position="173"/>
    </location>
</feature>
<feature type="modified residue" description="Phosphoserine" evidence="2">
    <location>
        <position position="372"/>
    </location>
</feature>
<feature type="modified residue" description="Phosphoserine" evidence="2">
    <location>
        <position position="450"/>
    </location>
</feature>
<feature type="modified residue" description="Phosphoserine" evidence="2">
    <location>
        <position position="482"/>
    </location>
</feature>
<feature type="modified residue" description="Phosphoserine" evidence="2">
    <location>
        <position position="524"/>
    </location>
</feature>
<feature type="modified residue" description="Phosphoserine" evidence="2">
    <location>
        <position position="582"/>
    </location>
</feature>
<feature type="cross-link" description="Glycyl lysine isopeptide (Lys-Gly) (interchain with G-Cter in SUMO)" evidence="2">
    <location>
        <position position="329"/>
    </location>
</feature>
<feature type="cross-link" description="Glycyl lysine isopeptide (Lys-Gly) (interchain with G-Cter in SUMO)" evidence="2">
    <location>
        <position position="562"/>
    </location>
</feature>
<feature type="cross-link" description="Glycyl lysine isopeptide (Lys-Gly) (interchain with G-Cter in ubiquitin)" evidence="2">
    <location>
        <position position="611"/>
    </location>
</feature>
<feature type="splice variant" id="VSP_017421" description="In isoform 2." evidence="7">
    <original>PHFNPSAIHNFYDNIGFVGPVPPKPKDQRSTIKAPKTQDTEDEEGAQWNCTACTFLNHPALIRCEQCEMPRHF</original>
    <variation>KVQCILS</variation>
    <location>
        <begin position="621"/>
        <end position="693"/>
    </location>
</feature>